<protein>
    <recommendedName>
        <fullName evidence="1">tRNA-specific 2-thiouridylase MnmA</fullName>
        <ecNumber evidence="1">2.8.1.13</ecNumber>
    </recommendedName>
</protein>
<sequence>MMSVEHSANSQKKVIVGMSGGVDSSVSAYLLKQQGYQVEGLFMKNWEEDDNEEYCTAAEDLADAQAVCDKLGIPLHTINFAAEYWDNVFEYFLAEYKAGRTPNPDILCNKEIKFKAFLEFADEVLDADYIAMGHYVRRTFPQNGEKPQMLRGLDGNKDQSYFLYTLSHEQVARTLFPVGELEKPEVRRIAEEQGLITAKKKDSTGICFIGERKFTDFLSRYLPAQPGKIETPEGKVIGEHQGLMYHTLGQRKGLHIGGMKESSEQPWYVADKDLKRNVLIAVQGADHPLLKSHGLVAAQLHWVDRTPITEPVRCSVKTRYRQSDIACTIIPLSDDRIKVMFDEPQVAVTPGQSAVFYQGEICLGGGIIEERI</sequence>
<organism>
    <name type="scientific">Vibrio cholerae serotype O1 (strain ATCC 39541 / Classical Ogawa 395 / O395)</name>
    <dbReference type="NCBI Taxonomy" id="345073"/>
    <lineage>
        <taxon>Bacteria</taxon>
        <taxon>Pseudomonadati</taxon>
        <taxon>Pseudomonadota</taxon>
        <taxon>Gammaproteobacteria</taxon>
        <taxon>Vibrionales</taxon>
        <taxon>Vibrionaceae</taxon>
        <taxon>Vibrio</taxon>
    </lineage>
</organism>
<evidence type="ECO:0000255" key="1">
    <source>
        <dbReference type="HAMAP-Rule" id="MF_00144"/>
    </source>
</evidence>
<name>MNMA_VIBC3</name>
<proteinExistence type="inferred from homology"/>
<gene>
    <name evidence="1" type="primary">mnmA</name>
    <name type="synonym">trmU</name>
    <name type="ordered locus">VC0395_A0646</name>
    <name type="ordered locus">VC395_1143</name>
</gene>
<feature type="chain" id="PRO_0000349853" description="tRNA-specific 2-thiouridylase MnmA">
    <location>
        <begin position="1"/>
        <end position="372"/>
    </location>
</feature>
<feature type="region of interest" description="Interaction with target base in tRNA" evidence="1">
    <location>
        <begin position="103"/>
        <end position="105"/>
    </location>
</feature>
<feature type="region of interest" description="Interaction with tRNA" evidence="1">
    <location>
        <begin position="157"/>
        <end position="159"/>
    </location>
</feature>
<feature type="region of interest" description="Interaction with tRNA" evidence="1">
    <location>
        <begin position="319"/>
        <end position="320"/>
    </location>
</feature>
<feature type="active site" description="Nucleophile" evidence="1">
    <location>
        <position position="108"/>
    </location>
</feature>
<feature type="active site" description="Cysteine persulfide intermediate" evidence="1">
    <location>
        <position position="207"/>
    </location>
</feature>
<feature type="binding site" evidence="1">
    <location>
        <begin position="17"/>
        <end position="24"/>
    </location>
    <ligand>
        <name>ATP</name>
        <dbReference type="ChEBI" id="CHEBI:30616"/>
    </ligand>
</feature>
<feature type="binding site" evidence="1">
    <location>
        <position position="43"/>
    </location>
    <ligand>
        <name>ATP</name>
        <dbReference type="ChEBI" id="CHEBI:30616"/>
    </ligand>
</feature>
<feature type="binding site" evidence="1">
    <location>
        <position position="133"/>
    </location>
    <ligand>
        <name>ATP</name>
        <dbReference type="ChEBI" id="CHEBI:30616"/>
    </ligand>
</feature>
<feature type="site" description="Interaction with tRNA" evidence="1">
    <location>
        <position position="134"/>
    </location>
</feature>
<feature type="site" description="Interaction with tRNA" evidence="1">
    <location>
        <position position="352"/>
    </location>
</feature>
<feature type="disulfide bond" description="Alternate" evidence="1">
    <location>
        <begin position="108"/>
        <end position="207"/>
    </location>
</feature>
<comment type="function">
    <text evidence="1">Catalyzes the 2-thiolation of uridine at the wobble position (U34) of tRNA, leading to the formation of s(2)U34.</text>
</comment>
<comment type="catalytic activity">
    <reaction evidence="1">
        <text>S-sulfanyl-L-cysteinyl-[protein] + uridine(34) in tRNA + AH2 + ATP = 2-thiouridine(34) in tRNA + L-cysteinyl-[protein] + A + AMP + diphosphate + H(+)</text>
        <dbReference type="Rhea" id="RHEA:47032"/>
        <dbReference type="Rhea" id="RHEA-COMP:10131"/>
        <dbReference type="Rhea" id="RHEA-COMP:11726"/>
        <dbReference type="Rhea" id="RHEA-COMP:11727"/>
        <dbReference type="Rhea" id="RHEA-COMP:11728"/>
        <dbReference type="ChEBI" id="CHEBI:13193"/>
        <dbReference type="ChEBI" id="CHEBI:15378"/>
        <dbReference type="ChEBI" id="CHEBI:17499"/>
        <dbReference type="ChEBI" id="CHEBI:29950"/>
        <dbReference type="ChEBI" id="CHEBI:30616"/>
        <dbReference type="ChEBI" id="CHEBI:33019"/>
        <dbReference type="ChEBI" id="CHEBI:61963"/>
        <dbReference type="ChEBI" id="CHEBI:65315"/>
        <dbReference type="ChEBI" id="CHEBI:87170"/>
        <dbReference type="ChEBI" id="CHEBI:456215"/>
        <dbReference type="EC" id="2.8.1.13"/>
    </reaction>
</comment>
<comment type="subcellular location">
    <subcellularLocation>
        <location evidence="1">Cytoplasm</location>
    </subcellularLocation>
</comment>
<comment type="similarity">
    <text evidence="1">Belongs to the MnmA/TRMU family.</text>
</comment>
<dbReference type="EC" id="2.8.1.13" evidence="1"/>
<dbReference type="EMBL" id="CP000627">
    <property type="protein sequence ID" value="ABQ20050.1"/>
    <property type="molecule type" value="Genomic_DNA"/>
</dbReference>
<dbReference type="EMBL" id="CP001235">
    <property type="protein sequence ID" value="ACP09153.1"/>
    <property type="molecule type" value="Genomic_DNA"/>
</dbReference>
<dbReference type="SMR" id="A5F2F2"/>
<dbReference type="KEGG" id="vco:VC0395_A0646"/>
<dbReference type="KEGG" id="vcr:VC395_1143"/>
<dbReference type="PATRIC" id="fig|345073.21.peg.1110"/>
<dbReference type="eggNOG" id="COG0482">
    <property type="taxonomic scope" value="Bacteria"/>
</dbReference>
<dbReference type="HOGENOM" id="CLU_035188_1_0_6"/>
<dbReference type="OrthoDB" id="9800696at2"/>
<dbReference type="Proteomes" id="UP000000249">
    <property type="component" value="Chromosome 2"/>
</dbReference>
<dbReference type="GO" id="GO:0005737">
    <property type="term" value="C:cytoplasm"/>
    <property type="evidence" value="ECO:0007669"/>
    <property type="project" value="UniProtKB-SubCell"/>
</dbReference>
<dbReference type="GO" id="GO:0005524">
    <property type="term" value="F:ATP binding"/>
    <property type="evidence" value="ECO:0007669"/>
    <property type="project" value="UniProtKB-KW"/>
</dbReference>
<dbReference type="GO" id="GO:0000049">
    <property type="term" value="F:tRNA binding"/>
    <property type="evidence" value="ECO:0007669"/>
    <property type="project" value="UniProtKB-KW"/>
</dbReference>
<dbReference type="GO" id="GO:0103016">
    <property type="term" value="F:tRNA-uridine 2-sulfurtransferase activity"/>
    <property type="evidence" value="ECO:0007669"/>
    <property type="project" value="UniProtKB-EC"/>
</dbReference>
<dbReference type="GO" id="GO:0002143">
    <property type="term" value="P:tRNA wobble position uridine thiolation"/>
    <property type="evidence" value="ECO:0007669"/>
    <property type="project" value="TreeGrafter"/>
</dbReference>
<dbReference type="CDD" id="cd01998">
    <property type="entry name" value="MnmA_TRMU-like"/>
    <property type="match status" value="1"/>
</dbReference>
<dbReference type="FunFam" id="2.30.30.280:FF:000001">
    <property type="entry name" value="tRNA-specific 2-thiouridylase MnmA"/>
    <property type="match status" value="1"/>
</dbReference>
<dbReference type="FunFam" id="2.40.30.10:FF:000023">
    <property type="entry name" value="tRNA-specific 2-thiouridylase MnmA"/>
    <property type="match status" value="1"/>
</dbReference>
<dbReference type="FunFam" id="3.40.50.620:FF:000004">
    <property type="entry name" value="tRNA-specific 2-thiouridylase MnmA"/>
    <property type="match status" value="1"/>
</dbReference>
<dbReference type="Gene3D" id="2.30.30.280">
    <property type="entry name" value="Adenine nucleotide alpha hydrolases-like domains"/>
    <property type="match status" value="1"/>
</dbReference>
<dbReference type="Gene3D" id="3.40.50.620">
    <property type="entry name" value="HUPs"/>
    <property type="match status" value="1"/>
</dbReference>
<dbReference type="Gene3D" id="2.40.30.10">
    <property type="entry name" value="Translation factors"/>
    <property type="match status" value="1"/>
</dbReference>
<dbReference type="HAMAP" id="MF_00144">
    <property type="entry name" value="tRNA_thiouridyl_MnmA"/>
    <property type="match status" value="1"/>
</dbReference>
<dbReference type="InterPro" id="IPR004506">
    <property type="entry name" value="MnmA-like"/>
</dbReference>
<dbReference type="InterPro" id="IPR046885">
    <property type="entry name" value="MnmA-like_C"/>
</dbReference>
<dbReference type="InterPro" id="IPR046884">
    <property type="entry name" value="MnmA-like_central"/>
</dbReference>
<dbReference type="InterPro" id="IPR023382">
    <property type="entry name" value="MnmA-like_central_sf"/>
</dbReference>
<dbReference type="InterPro" id="IPR014729">
    <property type="entry name" value="Rossmann-like_a/b/a_fold"/>
</dbReference>
<dbReference type="NCBIfam" id="NF001138">
    <property type="entry name" value="PRK00143.1"/>
    <property type="match status" value="1"/>
</dbReference>
<dbReference type="NCBIfam" id="TIGR00420">
    <property type="entry name" value="trmU"/>
    <property type="match status" value="1"/>
</dbReference>
<dbReference type="PANTHER" id="PTHR11933:SF5">
    <property type="entry name" value="MITOCHONDRIAL TRNA-SPECIFIC 2-THIOURIDYLASE 1"/>
    <property type="match status" value="1"/>
</dbReference>
<dbReference type="PANTHER" id="PTHR11933">
    <property type="entry name" value="TRNA 5-METHYLAMINOMETHYL-2-THIOURIDYLATE -METHYLTRANSFERASE"/>
    <property type="match status" value="1"/>
</dbReference>
<dbReference type="Pfam" id="PF03054">
    <property type="entry name" value="tRNA_Me_trans"/>
    <property type="match status" value="1"/>
</dbReference>
<dbReference type="Pfam" id="PF20258">
    <property type="entry name" value="tRNA_Me_trans_C"/>
    <property type="match status" value="1"/>
</dbReference>
<dbReference type="Pfam" id="PF20259">
    <property type="entry name" value="tRNA_Me_trans_M"/>
    <property type="match status" value="1"/>
</dbReference>
<dbReference type="SUPFAM" id="SSF52402">
    <property type="entry name" value="Adenine nucleotide alpha hydrolases-like"/>
    <property type="match status" value="1"/>
</dbReference>
<reference key="1">
    <citation type="submission" date="2007-03" db="EMBL/GenBank/DDBJ databases">
        <authorList>
            <person name="Heidelberg J."/>
        </authorList>
    </citation>
    <scope>NUCLEOTIDE SEQUENCE [LARGE SCALE GENOMIC DNA]</scope>
    <source>
        <strain>ATCC 39541 / Classical Ogawa 395 / O395</strain>
    </source>
</reference>
<reference key="2">
    <citation type="journal article" date="2008" name="PLoS ONE">
        <title>A recalibrated molecular clock and independent origins for the cholera pandemic clones.</title>
        <authorList>
            <person name="Feng L."/>
            <person name="Reeves P.R."/>
            <person name="Lan R."/>
            <person name="Ren Y."/>
            <person name="Gao C."/>
            <person name="Zhou Z."/>
            <person name="Ren Y."/>
            <person name="Cheng J."/>
            <person name="Wang W."/>
            <person name="Wang J."/>
            <person name="Qian W."/>
            <person name="Li D."/>
            <person name="Wang L."/>
        </authorList>
    </citation>
    <scope>NUCLEOTIDE SEQUENCE [LARGE SCALE GENOMIC DNA]</scope>
    <source>
        <strain>ATCC 39541 / Classical Ogawa 395 / O395</strain>
    </source>
</reference>
<accession>A5F2F2</accession>
<accession>C3LZD7</accession>
<keyword id="KW-0067">ATP-binding</keyword>
<keyword id="KW-0963">Cytoplasm</keyword>
<keyword id="KW-1015">Disulfide bond</keyword>
<keyword id="KW-0547">Nucleotide-binding</keyword>
<keyword id="KW-0694">RNA-binding</keyword>
<keyword id="KW-0808">Transferase</keyword>
<keyword id="KW-0819">tRNA processing</keyword>
<keyword id="KW-0820">tRNA-binding</keyword>